<sequence>MSMDIVERINKLKEEKNAVILAHNYQPKEIQKIADFLGDSLELCIKAKETDADIIVFCGVDFMGESAKILNPEKKVLMPEIEGTQCPMAHQLPPEIIKKYRELYPEAPLVVYVNTTAETKALADITCTSANADRVVNSLDADTVLFGPDNNLAYYVQKRTDKKVIAIPEGGGCYVHKKFTIDDLKRVKSKYPNAKVLIHPECSPELQDNADYIASTSGILRIVLESDDEEFIIGTEVGMINRLEIELEKLGKKKTLIPLRKDAICHEMKRITLEKIEKCLLEERYEIKLEKEIIEKAQKAIERMLRI</sequence>
<feature type="chain" id="PRO_0000155803" description="Quinolinate synthase">
    <location>
        <begin position="1"/>
        <end position="307"/>
    </location>
</feature>
<feature type="binding site" evidence="1">
    <location>
        <position position="23"/>
    </location>
    <ligand>
        <name>iminosuccinate</name>
        <dbReference type="ChEBI" id="CHEBI:77875"/>
    </ligand>
</feature>
<feature type="binding site" evidence="1">
    <location>
        <position position="40"/>
    </location>
    <ligand>
        <name>iminosuccinate</name>
        <dbReference type="ChEBI" id="CHEBI:77875"/>
    </ligand>
</feature>
<feature type="binding site" evidence="1">
    <location>
        <position position="86"/>
    </location>
    <ligand>
        <name>[4Fe-4S] cluster</name>
        <dbReference type="ChEBI" id="CHEBI:49883"/>
    </ligand>
</feature>
<feature type="binding site" evidence="1">
    <location>
        <begin position="112"/>
        <end position="114"/>
    </location>
    <ligand>
        <name>iminosuccinate</name>
        <dbReference type="ChEBI" id="CHEBI:77875"/>
    </ligand>
</feature>
<feature type="binding site" evidence="1">
    <location>
        <position position="129"/>
    </location>
    <ligand>
        <name>iminosuccinate</name>
        <dbReference type="ChEBI" id="CHEBI:77875"/>
    </ligand>
</feature>
<feature type="binding site" evidence="1">
    <location>
        <position position="173"/>
    </location>
    <ligand>
        <name>[4Fe-4S] cluster</name>
        <dbReference type="ChEBI" id="CHEBI:49883"/>
    </ligand>
</feature>
<feature type="binding site" evidence="1">
    <location>
        <begin position="199"/>
        <end position="201"/>
    </location>
    <ligand>
        <name>iminosuccinate</name>
        <dbReference type="ChEBI" id="CHEBI:77875"/>
    </ligand>
</feature>
<feature type="binding site" evidence="1">
    <location>
        <position position="216"/>
    </location>
    <ligand>
        <name>iminosuccinate</name>
        <dbReference type="ChEBI" id="CHEBI:77875"/>
    </ligand>
</feature>
<feature type="binding site" evidence="1">
    <location>
        <position position="265"/>
    </location>
    <ligand>
        <name>[4Fe-4S] cluster</name>
        <dbReference type="ChEBI" id="CHEBI:49883"/>
    </ligand>
</feature>
<proteinExistence type="inferred from homology"/>
<protein>
    <recommendedName>
        <fullName evidence="1">Quinolinate synthase</fullName>
        <ecNumber evidence="1">2.5.1.72</ecNumber>
    </recommendedName>
</protein>
<name>NADA_METJA</name>
<comment type="function">
    <text evidence="1">Catalyzes the condensation of iminoaspartate with dihydroxyacetone phosphate to form quinolinate.</text>
</comment>
<comment type="catalytic activity">
    <reaction evidence="1">
        <text>iminosuccinate + dihydroxyacetone phosphate = quinolinate + phosphate + 2 H2O + H(+)</text>
        <dbReference type="Rhea" id="RHEA:25888"/>
        <dbReference type="ChEBI" id="CHEBI:15377"/>
        <dbReference type="ChEBI" id="CHEBI:15378"/>
        <dbReference type="ChEBI" id="CHEBI:29959"/>
        <dbReference type="ChEBI" id="CHEBI:43474"/>
        <dbReference type="ChEBI" id="CHEBI:57642"/>
        <dbReference type="ChEBI" id="CHEBI:77875"/>
        <dbReference type="EC" id="2.5.1.72"/>
    </reaction>
    <physiologicalReaction direction="left-to-right" evidence="1">
        <dbReference type="Rhea" id="RHEA:25889"/>
    </physiologicalReaction>
</comment>
<comment type="cofactor">
    <cofactor evidence="1">
        <name>[4Fe-4S] cluster</name>
        <dbReference type="ChEBI" id="CHEBI:49883"/>
    </cofactor>
    <text evidence="1">Binds 1 [4Fe-4S] cluster per subunit.</text>
</comment>
<comment type="pathway">
    <text evidence="1">Cofactor biosynthesis; NAD(+) biosynthesis; quinolinate from iminoaspartate: step 1/1.</text>
</comment>
<comment type="subcellular location">
    <subcellularLocation>
        <location evidence="1">Cytoplasm</location>
    </subcellularLocation>
</comment>
<comment type="similarity">
    <text evidence="1">Belongs to the quinolinate synthase family. Type 2 subfamily.</text>
</comment>
<gene>
    <name evidence="1" type="primary">nadA</name>
    <name type="ordered locus">MJ0407</name>
</gene>
<reference key="1">
    <citation type="journal article" date="1996" name="Science">
        <title>Complete genome sequence of the methanogenic archaeon, Methanococcus jannaschii.</title>
        <authorList>
            <person name="Bult C.J."/>
            <person name="White O."/>
            <person name="Olsen G.J."/>
            <person name="Zhou L."/>
            <person name="Fleischmann R.D."/>
            <person name="Sutton G.G."/>
            <person name="Blake J.A."/>
            <person name="FitzGerald L.M."/>
            <person name="Clayton R.A."/>
            <person name="Gocayne J.D."/>
            <person name="Kerlavage A.R."/>
            <person name="Dougherty B.A."/>
            <person name="Tomb J.-F."/>
            <person name="Adams M.D."/>
            <person name="Reich C.I."/>
            <person name="Overbeek R."/>
            <person name="Kirkness E.F."/>
            <person name="Weinstock K.G."/>
            <person name="Merrick J.M."/>
            <person name="Glodek A."/>
            <person name="Scott J.L."/>
            <person name="Geoghagen N.S.M."/>
            <person name="Weidman J.F."/>
            <person name="Fuhrmann J.L."/>
            <person name="Nguyen D."/>
            <person name="Utterback T.R."/>
            <person name="Kelley J.M."/>
            <person name="Peterson J.D."/>
            <person name="Sadow P.W."/>
            <person name="Hanna M.C."/>
            <person name="Cotton M.D."/>
            <person name="Roberts K.M."/>
            <person name="Hurst M.A."/>
            <person name="Kaine B.P."/>
            <person name="Borodovsky M."/>
            <person name="Klenk H.-P."/>
            <person name="Fraser C.M."/>
            <person name="Smith H.O."/>
            <person name="Woese C.R."/>
            <person name="Venter J.C."/>
        </authorList>
    </citation>
    <scope>NUCLEOTIDE SEQUENCE [LARGE SCALE GENOMIC DNA]</scope>
    <source>
        <strain>ATCC 43067 / DSM 2661 / JAL-1 / JCM 10045 / NBRC 100440</strain>
    </source>
</reference>
<keyword id="KW-0004">4Fe-4S</keyword>
<keyword id="KW-0963">Cytoplasm</keyword>
<keyword id="KW-0408">Iron</keyword>
<keyword id="KW-0411">Iron-sulfur</keyword>
<keyword id="KW-0479">Metal-binding</keyword>
<keyword id="KW-0662">Pyridine nucleotide biosynthesis</keyword>
<keyword id="KW-1185">Reference proteome</keyword>
<keyword id="KW-0808">Transferase</keyword>
<organism>
    <name type="scientific">Methanocaldococcus jannaschii (strain ATCC 43067 / DSM 2661 / JAL-1 / JCM 10045 / NBRC 100440)</name>
    <name type="common">Methanococcus jannaschii</name>
    <dbReference type="NCBI Taxonomy" id="243232"/>
    <lineage>
        <taxon>Archaea</taxon>
        <taxon>Methanobacteriati</taxon>
        <taxon>Methanobacteriota</taxon>
        <taxon>Methanomada group</taxon>
        <taxon>Methanococci</taxon>
        <taxon>Methanococcales</taxon>
        <taxon>Methanocaldococcaceae</taxon>
        <taxon>Methanocaldococcus</taxon>
    </lineage>
</organism>
<accession>Q57850</accession>
<dbReference type="EC" id="2.5.1.72" evidence="1"/>
<dbReference type="EMBL" id="L77117">
    <property type="protein sequence ID" value="AAB98397.1"/>
    <property type="molecule type" value="Genomic_DNA"/>
</dbReference>
<dbReference type="PIR" id="G64350">
    <property type="entry name" value="G64350"/>
</dbReference>
<dbReference type="SMR" id="Q57850"/>
<dbReference type="FunCoup" id="Q57850">
    <property type="interactions" value="112"/>
</dbReference>
<dbReference type="STRING" id="243232.MJ_0407"/>
<dbReference type="PaxDb" id="243232-MJ_0407"/>
<dbReference type="EnsemblBacteria" id="AAB98397">
    <property type="protein sequence ID" value="AAB98397"/>
    <property type="gene ID" value="MJ_0407"/>
</dbReference>
<dbReference type="KEGG" id="mja:MJ_0407"/>
<dbReference type="eggNOG" id="arCOG04459">
    <property type="taxonomic scope" value="Archaea"/>
</dbReference>
<dbReference type="HOGENOM" id="CLU_047382_0_0_2"/>
<dbReference type="InParanoid" id="Q57850"/>
<dbReference type="PhylomeDB" id="Q57850"/>
<dbReference type="UniPathway" id="UPA00253">
    <property type="reaction ID" value="UER00327"/>
</dbReference>
<dbReference type="Proteomes" id="UP000000805">
    <property type="component" value="Chromosome"/>
</dbReference>
<dbReference type="GO" id="GO:0005737">
    <property type="term" value="C:cytoplasm"/>
    <property type="evidence" value="ECO:0007669"/>
    <property type="project" value="UniProtKB-SubCell"/>
</dbReference>
<dbReference type="GO" id="GO:0051539">
    <property type="term" value="F:4 iron, 4 sulfur cluster binding"/>
    <property type="evidence" value="ECO:0000318"/>
    <property type="project" value="GO_Central"/>
</dbReference>
<dbReference type="GO" id="GO:0046872">
    <property type="term" value="F:metal ion binding"/>
    <property type="evidence" value="ECO:0007669"/>
    <property type="project" value="UniProtKB-KW"/>
</dbReference>
<dbReference type="GO" id="GO:0008987">
    <property type="term" value="F:quinolinate synthetase A activity"/>
    <property type="evidence" value="ECO:0000318"/>
    <property type="project" value="GO_Central"/>
</dbReference>
<dbReference type="GO" id="GO:0034628">
    <property type="term" value="P:'de novo' NAD biosynthetic process from L-aspartate"/>
    <property type="evidence" value="ECO:0000318"/>
    <property type="project" value="GO_Central"/>
</dbReference>
<dbReference type="FunFam" id="3.40.50.10800:FF:000001">
    <property type="entry name" value="Quinolinate synthase A"/>
    <property type="match status" value="1"/>
</dbReference>
<dbReference type="Gene3D" id="3.40.50.10800">
    <property type="entry name" value="NadA-like"/>
    <property type="match status" value="3"/>
</dbReference>
<dbReference type="HAMAP" id="MF_00568">
    <property type="entry name" value="NadA_type2"/>
    <property type="match status" value="1"/>
</dbReference>
<dbReference type="InterPro" id="IPR003473">
    <property type="entry name" value="NadA"/>
</dbReference>
<dbReference type="InterPro" id="IPR036094">
    <property type="entry name" value="NadA_sf"/>
</dbReference>
<dbReference type="InterPro" id="IPR023066">
    <property type="entry name" value="Quinolinate_synth_type2"/>
</dbReference>
<dbReference type="NCBIfam" id="TIGR00550">
    <property type="entry name" value="nadA"/>
    <property type="match status" value="1"/>
</dbReference>
<dbReference type="NCBIfam" id="NF006878">
    <property type="entry name" value="PRK09375.1-2"/>
    <property type="match status" value="1"/>
</dbReference>
<dbReference type="PANTHER" id="PTHR30573:SF0">
    <property type="entry name" value="QUINOLINATE SYNTHASE, CHLOROPLASTIC"/>
    <property type="match status" value="1"/>
</dbReference>
<dbReference type="PANTHER" id="PTHR30573">
    <property type="entry name" value="QUINOLINATE SYNTHETASE A"/>
    <property type="match status" value="1"/>
</dbReference>
<dbReference type="Pfam" id="PF02445">
    <property type="entry name" value="NadA"/>
    <property type="match status" value="1"/>
</dbReference>
<dbReference type="SUPFAM" id="SSF142754">
    <property type="entry name" value="NadA-like"/>
    <property type="match status" value="1"/>
</dbReference>
<evidence type="ECO:0000255" key="1">
    <source>
        <dbReference type="HAMAP-Rule" id="MF_00568"/>
    </source>
</evidence>